<organism>
    <name type="scientific">Thermus thermophilus</name>
    <dbReference type="NCBI Taxonomy" id="274"/>
    <lineage>
        <taxon>Bacteria</taxon>
        <taxon>Thermotogati</taxon>
        <taxon>Deinococcota</taxon>
        <taxon>Deinococci</taxon>
        <taxon>Thermales</taxon>
        <taxon>Thermaceae</taxon>
        <taxon>Thermus</taxon>
    </lineage>
</organism>
<proteinExistence type="evidence at protein level"/>
<accession>Q75UV1</accession>
<accession>F6DFL8</accession>
<name>NDX1_THETH</name>
<dbReference type="EC" id="3.6.1.61" evidence="2"/>
<dbReference type="EMBL" id="AB125632">
    <property type="protein sequence ID" value="BAD18071.1"/>
    <property type="molecule type" value="Genomic_DNA"/>
</dbReference>
<dbReference type="RefSeq" id="WP_011228981.1">
    <property type="nucleotide sequence ID" value="NZ_DFSU01000090.1"/>
</dbReference>
<dbReference type="RefSeq" id="YP_145146.1">
    <property type="nucleotide sequence ID" value="NC_006461.1"/>
</dbReference>
<dbReference type="PDB" id="1VC8">
    <property type="method" value="X-ray"/>
    <property type="resolution" value="2.00 A"/>
    <property type="chains" value="A/B=1-126"/>
</dbReference>
<dbReference type="PDB" id="1VC9">
    <property type="method" value="X-ray"/>
    <property type="resolution" value="2.30 A"/>
    <property type="chains" value="A/B=1-126"/>
</dbReference>
<dbReference type="PDB" id="1VCD">
    <property type="method" value="X-ray"/>
    <property type="resolution" value="1.70 A"/>
    <property type="chains" value="A/B=1-126"/>
</dbReference>
<dbReference type="PDBsum" id="1VC8"/>
<dbReference type="PDBsum" id="1VC9"/>
<dbReference type="PDBsum" id="1VCD"/>
<dbReference type="SMR" id="Q75UV1"/>
<dbReference type="DrugBank" id="DB02738">
    <property type="generic name" value="Adenosine-5'-Pentaphosphate"/>
</dbReference>
<dbReference type="OMA" id="KITWYLM"/>
<dbReference type="BRENDA" id="3.6.1.61">
    <property type="organism ID" value="2305"/>
</dbReference>
<dbReference type="EvolutionaryTrace" id="Q75UV1"/>
<dbReference type="GO" id="GO:0005524">
    <property type="term" value="F:ATP binding"/>
    <property type="evidence" value="ECO:0007669"/>
    <property type="project" value="UniProtKB-KW"/>
</dbReference>
<dbReference type="GO" id="GO:0004081">
    <property type="term" value="F:bis(5'-nucleosyl)-tetraphosphatase (asymmetrical) activity"/>
    <property type="evidence" value="ECO:0007669"/>
    <property type="project" value="TreeGrafter"/>
</dbReference>
<dbReference type="GO" id="GO:0016818">
    <property type="term" value="F:hydrolase activity, acting on acid anhydrides, in phosphorus-containing anhydrides"/>
    <property type="evidence" value="ECO:0000314"/>
    <property type="project" value="UniProtKB"/>
</dbReference>
<dbReference type="GO" id="GO:0046872">
    <property type="term" value="F:metal ion binding"/>
    <property type="evidence" value="ECO:0007669"/>
    <property type="project" value="UniProtKB-KW"/>
</dbReference>
<dbReference type="GO" id="GO:0006167">
    <property type="term" value="P:AMP biosynthetic process"/>
    <property type="evidence" value="ECO:0007669"/>
    <property type="project" value="TreeGrafter"/>
</dbReference>
<dbReference type="GO" id="GO:0006754">
    <property type="term" value="P:ATP biosynthetic process"/>
    <property type="evidence" value="ECO:0007669"/>
    <property type="project" value="TreeGrafter"/>
</dbReference>
<dbReference type="CDD" id="cd03673">
    <property type="entry name" value="NUDIX_Ap6A_hydrolase"/>
    <property type="match status" value="1"/>
</dbReference>
<dbReference type="FunFam" id="3.90.79.10:FF:000133">
    <property type="entry name" value="Diadenosine hexaphosphate hydrolase"/>
    <property type="match status" value="1"/>
</dbReference>
<dbReference type="Gene3D" id="3.90.79.10">
    <property type="entry name" value="Nucleoside Triphosphate Pyrophosphohydrolase"/>
    <property type="match status" value="1"/>
</dbReference>
<dbReference type="InterPro" id="IPR020476">
    <property type="entry name" value="Nudix_hydrolase"/>
</dbReference>
<dbReference type="InterPro" id="IPR015797">
    <property type="entry name" value="NUDIX_hydrolase-like_dom_sf"/>
</dbReference>
<dbReference type="InterPro" id="IPR020084">
    <property type="entry name" value="NUDIX_hydrolase_CS"/>
</dbReference>
<dbReference type="InterPro" id="IPR000086">
    <property type="entry name" value="NUDIX_hydrolase_dom"/>
</dbReference>
<dbReference type="InterPro" id="IPR051325">
    <property type="entry name" value="Nudix_hydrolase_domain"/>
</dbReference>
<dbReference type="PANTHER" id="PTHR21340:SF0">
    <property type="entry name" value="BIS(5'-NUCLEOSYL)-TETRAPHOSPHATASE [ASYMMETRICAL]"/>
    <property type="match status" value="1"/>
</dbReference>
<dbReference type="PANTHER" id="PTHR21340">
    <property type="entry name" value="DIADENOSINE 5,5-P1,P4-TETRAPHOSPHATE PYROPHOSPHOHYDROLASE MUTT"/>
    <property type="match status" value="1"/>
</dbReference>
<dbReference type="Pfam" id="PF00293">
    <property type="entry name" value="NUDIX"/>
    <property type="match status" value="1"/>
</dbReference>
<dbReference type="PRINTS" id="PR00502">
    <property type="entry name" value="NUDIXFAMILY"/>
</dbReference>
<dbReference type="SUPFAM" id="SSF55811">
    <property type="entry name" value="Nudix"/>
    <property type="match status" value="1"/>
</dbReference>
<dbReference type="PROSITE" id="PS51462">
    <property type="entry name" value="NUDIX"/>
    <property type="match status" value="1"/>
</dbReference>
<dbReference type="PROSITE" id="PS00893">
    <property type="entry name" value="NUDIX_BOX"/>
    <property type="match status" value="1"/>
</dbReference>
<gene>
    <name evidence="4" type="primary">ndx1</name>
</gene>
<sequence length="126" mass="14170">MELGAGGVVFNAKREVLLLRDRMGFWVFPKGHPEPGESLEEAAVREVWEETGVRAEVLLPLYPTRYVNPKGVEREVHWFLMRGEGAPRLEEGMTGAGWFSPEEARALLAFPEDLGLLEVALERLPL</sequence>
<keyword id="KW-0002">3D-structure</keyword>
<keyword id="KW-0067">ATP-binding</keyword>
<keyword id="KW-0903">Direct protein sequencing</keyword>
<keyword id="KW-0378">Hydrolase</keyword>
<keyword id="KW-0460">Magnesium</keyword>
<keyword id="KW-0479">Metal-binding</keyword>
<keyword id="KW-0547">Nucleotide-binding</keyword>
<evidence type="ECO:0000255" key="1">
    <source>
        <dbReference type="PROSITE-ProRule" id="PRU00794"/>
    </source>
</evidence>
<evidence type="ECO:0000269" key="2">
    <source>
    </source>
</evidence>
<evidence type="ECO:0000269" key="3">
    <source ref="2"/>
</evidence>
<evidence type="ECO:0000303" key="4">
    <source>
    </source>
</evidence>
<evidence type="ECO:0000305" key="5"/>
<evidence type="ECO:0000305" key="6">
    <source>
    </source>
</evidence>
<evidence type="ECO:0000305" key="7">
    <source ref="2"/>
</evidence>
<evidence type="ECO:0007829" key="8">
    <source>
        <dbReference type="PDB" id="1VCD"/>
    </source>
</evidence>
<reference key="1">
    <citation type="journal article" date="2004" name="J. Biol. Chem.">
        <title>The Nudix hydrolase Ndx1 from Thermus thermophilus HB8 is a diadenosine hexaphosphate hydrolase with a novel activity.</title>
        <authorList>
            <person name="Iwai T."/>
            <person name="Kuramitsu S."/>
            <person name="Masui R."/>
        </authorList>
    </citation>
    <scope>NUCLEOTIDE SEQUENCE [GENOMIC DNA]</scope>
    <scope>PROTEIN SEQUENCE OF 1-9</scope>
    <scope>FUNCTION</scope>
    <scope>CATALYTIC ACTIVITY</scope>
    <scope>MUTAGENESIS OF TRP-26; GLU-46; GLU-49 AND GLU-50</scope>
    <scope>BIOPHYSICOCHEMICAL PROPERTIES</scope>
    <scope>SUBSTRATE SPECIFICITY</scope>
    <scope>ACTIVITY REGULATION</scope>
    <scope>COFACTOR</scope>
    <scope>SUBUNIT</scope>
    <source>
        <strain>HB8</strain>
    </source>
</reference>
<reference key="2">
    <citation type="submission" date="2004-03" db="PDB data bank">
        <title>Crystal Structure of Nudix Protein Ndx1 from Thermus thermophilus HB8 in binary complex with diadenosine hexaphosphate.</title>
        <authorList>
            <person name="Iwai T."/>
            <person name="Nakagawa N."/>
            <person name="Kuramitsu S."/>
            <person name="Masui R."/>
        </authorList>
    </citation>
    <scope>X-RAY CRYSTALLOGRAPHY (2.00 ANGSTROMS) IN COMPLEX WITH SUBSTRATE ANALOGS AND MAGNESIUM ION</scope>
    <scope>SUBUNIT</scope>
</reference>
<feature type="chain" id="PRO_0000422740" description="Diadenosine hexaphosphate hydrolase">
    <location>
        <begin position="1"/>
        <end position="126"/>
    </location>
</feature>
<feature type="domain" description="Nudix hydrolase" evidence="1">
    <location>
        <begin position="1"/>
        <end position="121"/>
    </location>
</feature>
<feature type="short sequence motif" description="Nudix box" evidence="1">
    <location>
        <begin position="31"/>
        <end position="52"/>
    </location>
</feature>
<feature type="binding site" evidence="3">
    <location>
        <begin position="21"/>
        <end position="23"/>
    </location>
    <ligand>
        <name>substrate</name>
    </ligand>
</feature>
<feature type="binding site" evidence="3">
    <location>
        <begin position="30"/>
        <end position="32"/>
    </location>
    <ligand>
        <name>substrate</name>
    </ligand>
</feature>
<feature type="binding site" evidence="3">
    <location>
        <position position="46"/>
    </location>
    <ligand>
        <name>Mg(2+)</name>
        <dbReference type="ChEBI" id="CHEBI:18420"/>
    </ligand>
</feature>
<feature type="binding site" evidence="6">
    <location>
        <position position="50"/>
    </location>
    <ligand>
        <name>Mg(2+)</name>
        <dbReference type="ChEBI" id="CHEBI:18420"/>
    </ligand>
</feature>
<feature type="binding site" evidence="3">
    <location>
        <begin position="66"/>
        <end position="68"/>
    </location>
    <ligand>
        <name>substrate</name>
    </ligand>
</feature>
<feature type="binding site" evidence="3">
    <location>
        <position position="74"/>
    </location>
    <ligand>
        <name>substrate</name>
    </ligand>
</feature>
<feature type="binding site" evidence="3">
    <location>
        <position position="112"/>
    </location>
    <ligand>
        <name>substrate</name>
    </ligand>
</feature>
<feature type="mutagenesis site" description="Strong decrease of the affinity for Ap6A." evidence="2">
    <original>W</original>
    <variation>A</variation>
    <location>
        <position position="26"/>
    </location>
</feature>
<feature type="mutagenesis site" description="Strong decrease in catalytic efficiency." evidence="2">
    <original>E</original>
    <variation>Q</variation>
    <location>
        <position position="46"/>
    </location>
</feature>
<feature type="mutagenesis site" description="Very little effect on hydrolase activity." evidence="2">
    <original>E</original>
    <variation>Q</variation>
    <location>
        <position position="49"/>
    </location>
</feature>
<feature type="mutagenesis site" description="Strong decrease in catalytic efficiency." evidence="2">
    <original>E</original>
    <variation>Q</variation>
    <location>
        <position position="50"/>
    </location>
</feature>
<feature type="strand" evidence="8">
    <location>
        <begin position="2"/>
        <end position="10"/>
    </location>
</feature>
<feature type="strand" evidence="8">
    <location>
        <begin position="16"/>
        <end position="20"/>
    </location>
</feature>
<feature type="helix" evidence="8">
    <location>
        <begin position="39"/>
        <end position="51"/>
    </location>
</feature>
<feature type="strand" evidence="8">
    <location>
        <begin position="54"/>
        <end position="67"/>
    </location>
</feature>
<feature type="strand" evidence="8">
    <location>
        <begin position="73"/>
        <end position="85"/>
    </location>
</feature>
<feature type="strand" evidence="8">
    <location>
        <begin position="95"/>
        <end position="99"/>
    </location>
</feature>
<feature type="helix" evidence="8">
    <location>
        <begin position="101"/>
        <end position="107"/>
    </location>
</feature>
<feature type="helix" evidence="8">
    <location>
        <begin position="111"/>
        <end position="123"/>
    </location>
</feature>
<comment type="function">
    <text evidence="2">Specifically hydrolyzes (di)adenosine polyphosphates but not ATP or diadenosine triphosphate, generating ATP as the product. Diadenosine hexaphosphate (Ap6A) is the preferred substrate and hydrolysis yields 2 ATP. It is the only enzyme that symmetrically hydrolyzes Ap6A. It also hydrolyzes diadenosine pentaphosphate (Ap5A), diadenosine tetraphosphate (Ap4A) and adenosine tetraphosphate (p4A).</text>
</comment>
<comment type="catalytic activity">
    <reaction evidence="2">
        <text>P(1),P(6)-bis(5'-adenosyl) hexaphosphate + H2O = 2 ATP + 2 H(+)</text>
        <dbReference type="Rhea" id="RHEA:32043"/>
        <dbReference type="ChEBI" id="CHEBI:15377"/>
        <dbReference type="ChEBI" id="CHEBI:15378"/>
        <dbReference type="ChEBI" id="CHEBI:30616"/>
        <dbReference type="ChEBI" id="CHEBI:63740"/>
        <dbReference type="EC" id="3.6.1.61"/>
    </reaction>
</comment>
<comment type="catalytic activity">
    <reaction evidence="2">
        <text>P(1),P(5)-bis(5'-adenosyl) pentaphosphate + H2O = ADP + ATP + 2 H(+)</text>
        <dbReference type="Rhea" id="RHEA:30527"/>
        <dbReference type="ChEBI" id="CHEBI:15377"/>
        <dbReference type="ChEBI" id="CHEBI:15378"/>
        <dbReference type="ChEBI" id="CHEBI:30616"/>
        <dbReference type="ChEBI" id="CHEBI:62041"/>
        <dbReference type="ChEBI" id="CHEBI:456216"/>
        <dbReference type="EC" id="3.6.1.61"/>
    </reaction>
</comment>
<comment type="catalytic activity">
    <reaction evidence="2">
        <text>P(1),P(4)-bis(5'-adenosyl) tetraphosphate + H2O = AMP + ATP + 2 H(+)</text>
        <dbReference type="Rhea" id="RHEA:32039"/>
        <dbReference type="ChEBI" id="CHEBI:15377"/>
        <dbReference type="ChEBI" id="CHEBI:15378"/>
        <dbReference type="ChEBI" id="CHEBI:30616"/>
        <dbReference type="ChEBI" id="CHEBI:58141"/>
        <dbReference type="ChEBI" id="CHEBI:456215"/>
        <dbReference type="EC" id="3.6.1.61"/>
    </reaction>
</comment>
<comment type="cofactor">
    <cofactor evidence="2">
        <name>Mg(2+)</name>
        <dbReference type="ChEBI" id="CHEBI:18420"/>
    </cofactor>
    <text evidence="2">Also able to use Mn(2+) and Zn(2+), but the activity is less than that obtained with Mg(2+) ions.</text>
</comment>
<comment type="activity regulation">
    <text evidence="2">Strongly inhibited by fluoride ions.</text>
</comment>
<comment type="biophysicochemical properties">
    <kinetics>
        <KM evidence="2">1 uM for p4A (at 25 degrees Celsius)</KM>
        <KM evidence="2">1.1 uM for Ap4A (at 25 degrees Celsius)</KM>
        <KM evidence="2">1.1 uM for Ap5A (at 25 degrees Celsius)</KM>
        <KM evidence="2">1.4 uM for Ap6A (at 25 degrees Celsius)</KM>
        <KM evidence="2">1.4 uM for diguanosine pentaphosphate (Gp5G) (at 25 degrees Celsius)</KM>
        <KM evidence="2">9.3 uM for diguanosine tetraphosphate (Gp4G) (at 25 degrees Celsius)</KM>
        <text>kcat is 4.1 sec(-1) with Ap6A (at 25 degrees Celsius). kcat is 1.4 sec(-1) with p4A (at 25 degrees Celsius). kcat is 0.52 sec(-1) with Ap5A (at 25 degrees Celsius). kcat is 0.27 sec(-1) with Ap4A (at 25 degrees Celsius).</text>
    </kinetics>
    <phDependence>
        <text evidence="2">Optimum pH is 8.</text>
    </phDependence>
    <temperatureDependence>
        <text evidence="2">Optimum temperature is 70 degrees Celsius. Ndx1 is stable up to 95 degrees Celsius at pH 7.5.</text>
    </temperatureDependence>
</comment>
<comment type="subunit">
    <text evidence="2 7">Monomer.</text>
</comment>
<comment type="similarity">
    <text evidence="5">Belongs to the Nudix hydrolase family.</text>
</comment>
<protein>
    <recommendedName>
        <fullName evidence="4">Diadenosine hexaphosphate hydrolase</fullName>
        <shortName evidence="4">Ap6A hydrolase</shortName>
        <ecNumber evidence="2">3.6.1.61</ecNumber>
    </recommendedName>
    <alternativeName>
        <fullName evidence="4">ATP-generating (di)nucleotide polyphosphate hydrolase</fullName>
    </alternativeName>
    <alternativeName>
        <fullName evidence="4">ATP-generating Ap6A hydrolase</fullName>
    </alternativeName>
    <alternativeName>
        <fullName evidence="4">Nudix protein</fullName>
    </alternativeName>
</protein>